<reference key="1">
    <citation type="journal article" date="2005" name="Peptides">
        <title>Direct cDNA cloning of novel conopeptide precursors of the O-superfamily.</title>
        <authorList>
            <person name="Kauferstein S."/>
            <person name="Melaun C."/>
            <person name="Mebs D."/>
        </authorList>
    </citation>
    <scope>NUCLEOTIDE SEQUENCE [MRNA]</scope>
    <source>
        <tissue>Venom duct</tissue>
    </source>
</reference>
<name>O163_CONVR</name>
<keyword id="KW-1015">Disulfide bond</keyword>
<keyword id="KW-0379">Hydroxylation</keyword>
<keyword id="KW-0872">Ion channel impairing toxin</keyword>
<keyword id="KW-0960">Knottin</keyword>
<keyword id="KW-0964">Secreted</keyword>
<keyword id="KW-0732">Signal</keyword>
<keyword id="KW-0800">Toxin</keyword>
<organism>
    <name type="scientific">Conus virgo</name>
    <name type="common">Virgin cone</name>
    <dbReference type="NCBI Taxonomy" id="89427"/>
    <lineage>
        <taxon>Eukaryota</taxon>
        <taxon>Metazoa</taxon>
        <taxon>Spiralia</taxon>
        <taxon>Lophotrochozoa</taxon>
        <taxon>Mollusca</taxon>
        <taxon>Gastropoda</taxon>
        <taxon>Caenogastropoda</taxon>
        <taxon>Neogastropoda</taxon>
        <taxon>Conoidea</taxon>
        <taxon>Conidae</taxon>
        <taxon>Conus</taxon>
        <taxon>Virgiconus</taxon>
    </lineage>
</organism>
<dbReference type="EMBL" id="AJ851183">
    <property type="protein sequence ID" value="CAH64856.1"/>
    <property type="molecule type" value="mRNA"/>
</dbReference>
<dbReference type="SMR" id="Q5K0C5"/>
<dbReference type="ConoServer" id="1072">
    <property type="toxin name" value="Vi6.3 precursor"/>
</dbReference>
<dbReference type="GO" id="GO:0005576">
    <property type="term" value="C:extracellular region"/>
    <property type="evidence" value="ECO:0007669"/>
    <property type="project" value="UniProtKB-SubCell"/>
</dbReference>
<dbReference type="GO" id="GO:0008200">
    <property type="term" value="F:ion channel inhibitor activity"/>
    <property type="evidence" value="ECO:0007669"/>
    <property type="project" value="InterPro"/>
</dbReference>
<dbReference type="GO" id="GO:0090729">
    <property type="term" value="F:toxin activity"/>
    <property type="evidence" value="ECO:0007669"/>
    <property type="project" value="UniProtKB-KW"/>
</dbReference>
<dbReference type="InterPro" id="IPR004214">
    <property type="entry name" value="Conotoxin"/>
</dbReference>
<dbReference type="Pfam" id="PF02950">
    <property type="entry name" value="Conotoxin"/>
    <property type="match status" value="1"/>
</dbReference>
<accession>Q5K0C5</accession>
<protein>
    <recommendedName>
        <fullName evidence="5">Conotoxin Vi6.3</fullName>
    </recommendedName>
    <alternativeName>
        <fullName evidence="4">virgo 10</fullName>
    </alternativeName>
</protein>
<proteinExistence type="inferred from homology"/>
<sequence length="79" mass="8508">MKLTCVLIITVLFLTASQLITADYSRDQRQYRAVRLGDEMRNFKGARDCGGQGEGCYTQPCCPGLRCRGGGTGGGACQL</sequence>
<evidence type="ECO:0000250" key="1">
    <source>
        <dbReference type="UniProtKB" id="P60179"/>
    </source>
</evidence>
<evidence type="ECO:0000250" key="2">
    <source>
        <dbReference type="UniProtKB" id="Q5K0C7"/>
    </source>
</evidence>
<evidence type="ECO:0000255" key="3"/>
<evidence type="ECO:0000303" key="4">
    <source>
    </source>
</evidence>
<evidence type="ECO:0000305" key="5"/>
<evidence type="ECO:0000305" key="6">
    <source>
    </source>
</evidence>
<feature type="signal peptide" evidence="3">
    <location>
        <begin position="1"/>
        <end position="22"/>
    </location>
</feature>
<feature type="propeptide" id="PRO_0000034999" evidence="2">
    <location>
        <begin position="23"/>
        <end position="47"/>
    </location>
</feature>
<feature type="peptide" id="PRO_0000035000" description="Conotoxin Vi6.3" evidence="2">
    <location>
        <begin position="48"/>
        <end position="79"/>
    </location>
</feature>
<feature type="modified residue" description="4-hydroxyproline" evidence="2">
    <location>
        <position position="60"/>
    </location>
</feature>
<feature type="modified residue" description="4-hydroxyproline" evidence="2">
    <location>
        <position position="63"/>
    </location>
</feature>
<feature type="disulfide bond" evidence="1">
    <location>
        <begin position="49"/>
        <end position="62"/>
    </location>
</feature>
<feature type="disulfide bond" evidence="1">
    <location>
        <begin position="56"/>
        <end position="67"/>
    </location>
</feature>
<feature type="disulfide bond" evidence="1">
    <location>
        <begin position="61"/>
        <end position="77"/>
    </location>
</feature>
<comment type="function">
    <text evidence="2">Ion channel inhibitor that inhibits the increase in intracellular calcium upon depolarization in DRG neurons. In vivo, both intraperitoneal and intracranial injections into mice induce hyperactivity.</text>
</comment>
<comment type="subcellular location">
    <subcellularLocation>
        <location evidence="6">Secreted</location>
    </subcellularLocation>
</comment>
<comment type="tissue specificity">
    <text evidence="6">Expressed by the venom duct.</text>
</comment>
<comment type="domain">
    <text evidence="5">The presence of a 'disulfide through disulfide knot' structurally defines this protein as a knottin.</text>
</comment>
<comment type="domain">
    <text evidence="5">The cysteine framework is VI/VII (C-C-CC-C-C).</text>
</comment>
<comment type="similarity">
    <text evidence="5">Belongs to the conotoxin O1 superfamily.</text>
</comment>
<comment type="caution">
    <text evidence="6">There is a sequence conflict at position 79 between the sequence from NCBI (CAH64856; Leu) and the sequence shown in fig.1 (Pro) of Kauferstein et al., 2005.</text>
</comment>